<organism>
    <name type="scientific">Salmonella heidelberg (strain SL476)</name>
    <dbReference type="NCBI Taxonomy" id="454169"/>
    <lineage>
        <taxon>Bacteria</taxon>
        <taxon>Pseudomonadati</taxon>
        <taxon>Pseudomonadota</taxon>
        <taxon>Gammaproteobacteria</taxon>
        <taxon>Enterobacterales</taxon>
        <taxon>Enterobacteriaceae</taxon>
        <taxon>Salmonella</taxon>
    </lineage>
</organism>
<sequence>MSIRPLHDRVIVKRKEVESKSAGGIVLTGSAAGKSTRGEIIAVGKGRILDNGTVQPLDVKVGDIVIFNDGYGVKSEKIDNEEVLIMSESDILAIVEA</sequence>
<name>CH10_SALHS</name>
<dbReference type="EMBL" id="CP001120">
    <property type="protein sequence ID" value="ACF68211.1"/>
    <property type="molecule type" value="Genomic_DNA"/>
</dbReference>
<dbReference type="RefSeq" id="WP_000027827.1">
    <property type="nucleotide sequence ID" value="NC_011083.1"/>
</dbReference>
<dbReference type="SMR" id="B4TF79"/>
<dbReference type="KEGG" id="seh:SeHA_C4747"/>
<dbReference type="HOGENOM" id="CLU_132825_1_1_6"/>
<dbReference type="Proteomes" id="UP000001866">
    <property type="component" value="Chromosome"/>
</dbReference>
<dbReference type="GO" id="GO:0005737">
    <property type="term" value="C:cytoplasm"/>
    <property type="evidence" value="ECO:0007669"/>
    <property type="project" value="UniProtKB-SubCell"/>
</dbReference>
<dbReference type="GO" id="GO:0005524">
    <property type="term" value="F:ATP binding"/>
    <property type="evidence" value="ECO:0007669"/>
    <property type="project" value="InterPro"/>
</dbReference>
<dbReference type="GO" id="GO:0046872">
    <property type="term" value="F:metal ion binding"/>
    <property type="evidence" value="ECO:0007669"/>
    <property type="project" value="TreeGrafter"/>
</dbReference>
<dbReference type="GO" id="GO:0044183">
    <property type="term" value="F:protein folding chaperone"/>
    <property type="evidence" value="ECO:0007669"/>
    <property type="project" value="InterPro"/>
</dbReference>
<dbReference type="GO" id="GO:0051087">
    <property type="term" value="F:protein-folding chaperone binding"/>
    <property type="evidence" value="ECO:0007669"/>
    <property type="project" value="TreeGrafter"/>
</dbReference>
<dbReference type="GO" id="GO:0051082">
    <property type="term" value="F:unfolded protein binding"/>
    <property type="evidence" value="ECO:0007669"/>
    <property type="project" value="TreeGrafter"/>
</dbReference>
<dbReference type="GO" id="GO:0051085">
    <property type="term" value="P:chaperone cofactor-dependent protein refolding"/>
    <property type="evidence" value="ECO:0007669"/>
    <property type="project" value="TreeGrafter"/>
</dbReference>
<dbReference type="CDD" id="cd00320">
    <property type="entry name" value="cpn10"/>
    <property type="match status" value="1"/>
</dbReference>
<dbReference type="FunFam" id="2.30.33.40:FF:000001">
    <property type="entry name" value="10 kDa chaperonin"/>
    <property type="match status" value="1"/>
</dbReference>
<dbReference type="Gene3D" id="2.30.33.40">
    <property type="entry name" value="GroES chaperonin"/>
    <property type="match status" value="1"/>
</dbReference>
<dbReference type="HAMAP" id="MF_00580">
    <property type="entry name" value="CH10"/>
    <property type="match status" value="1"/>
</dbReference>
<dbReference type="InterPro" id="IPR020818">
    <property type="entry name" value="Chaperonin_GroES"/>
</dbReference>
<dbReference type="InterPro" id="IPR037124">
    <property type="entry name" value="Chaperonin_GroES_sf"/>
</dbReference>
<dbReference type="InterPro" id="IPR018369">
    <property type="entry name" value="Chaprnonin_Cpn10_CS"/>
</dbReference>
<dbReference type="InterPro" id="IPR011032">
    <property type="entry name" value="GroES-like_sf"/>
</dbReference>
<dbReference type="NCBIfam" id="NF001526">
    <property type="entry name" value="PRK00364.1-1"/>
    <property type="match status" value="1"/>
</dbReference>
<dbReference type="NCBIfam" id="NF001527">
    <property type="entry name" value="PRK00364.1-2"/>
    <property type="match status" value="1"/>
</dbReference>
<dbReference type="NCBIfam" id="NF001531">
    <property type="entry name" value="PRK00364.2-2"/>
    <property type="match status" value="1"/>
</dbReference>
<dbReference type="PANTHER" id="PTHR10772">
    <property type="entry name" value="10 KDA HEAT SHOCK PROTEIN"/>
    <property type="match status" value="1"/>
</dbReference>
<dbReference type="PANTHER" id="PTHR10772:SF58">
    <property type="entry name" value="CO-CHAPERONIN GROES"/>
    <property type="match status" value="1"/>
</dbReference>
<dbReference type="Pfam" id="PF00166">
    <property type="entry name" value="Cpn10"/>
    <property type="match status" value="1"/>
</dbReference>
<dbReference type="PRINTS" id="PR00297">
    <property type="entry name" value="CHAPERONIN10"/>
</dbReference>
<dbReference type="SMART" id="SM00883">
    <property type="entry name" value="Cpn10"/>
    <property type="match status" value="1"/>
</dbReference>
<dbReference type="SUPFAM" id="SSF50129">
    <property type="entry name" value="GroES-like"/>
    <property type="match status" value="1"/>
</dbReference>
<dbReference type="PROSITE" id="PS00681">
    <property type="entry name" value="CHAPERONINS_CPN10"/>
    <property type="match status" value="1"/>
</dbReference>
<gene>
    <name evidence="1" type="primary">groES</name>
    <name evidence="1" type="synonym">groS</name>
    <name type="ordered locus">SeHA_C4747</name>
</gene>
<protein>
    <recommendedName>
        <fullName evidence="1">Co-chaperonin GroES</fullName>
    </recommendedName>
    <alternativeName>
        <fullName evidence="1">10 kDa chaperonin</fullName>
    </alternativeName>
    <alternativeName>
        <fullName evidence="1">Chaperonin-10</fullName>
        <shortName evidence="1">Cpn10</shortName>
    </alternativeName>
</protein>
<comment type="function">
    <text evidence="1">Together with the chaperonin GroEL, plays an essential role in assisting protein folding. The GroEL-GroES system forms a nano-cage that allows encapsulation of the non-native substrate proteins and provides a physical environment optimized to promote and accelerate protein folding. GroES binds to the apical surface of the GroEL ring, thereby capping the opening of the GroEL channel.</text>
</comment>
<comment type="subunit">
    <text evidence="1">Heptamer of 7 subunits arranged in a ring. Interacts with the chaperonin GroEL.</text>
</comment>
<comment type="subcellular location">
    <subcellularLocation>
        <location evidence="1">Cytoplasm</location>
    </subcellularLocation>
</comment>
<comment type="similarity">
    <text evidence="1">Belongs to the GroES chaperonin family.</text>
</comment>
<accession>B4TF79</accession>
<evidence type="ECO:0000255" key="1">
    <source>
        <dbReference type="HAMAP-Rule" id="MF_00580"/>
    </source>
</evidence>
<reference key="1">
    <citation type="journal article" date="2011" name="J. Bacteriol.">
        <title>Comparative genomics of 28 Salmonella enterica isolates: evidence for CRISPR-mediated adaptive sublineage evolution.</title>
        <authorList>
            <person name="Fricke W.F."/>
            <person name="Mammel M.K."/>
            <person name="McDermott P.F."/>
            <person name="Tartera C."/>
            <person name="White D.G."/>
            <person name="Leclerc J.E."/>
            <person name="Ravel J."/>
            <person name="Cebula T.A."/>
        </authorList>
    </citation>
    <scope>NUCLEOTIDE SEQUENCE [LARGE SCALE GENOMIC DNA]</scope>
    <source>
        <strain>SL476</strain>
    </source>
</reference>
<feature type="chain" id="PRO_1000129702" description="Co-chaperonin GroES">
    <location>
        <begin position="1"/>
        <end position="97"/>
    </location>
</feature>
<keyword id="KW-0143">Chaperone</keyword>
<keyword id="KW-0963">Cytoplasm</keyword>
<proteinExistence type="inferred from homology"/>